<reference evidence="3" key="1">
    <citation type="journal article" date="1998" name="Phytochemistry">
        <title>Amino acid sequence of ferredoxin from Physalis alkekengi var. francheti.</title>
        <authorList>
            <person name="Mino Y."/>
            <person name="Yasuda K."/>
        </authorList>
    </citation>
    <scope>PROTEIN SEQUENCE</scope>
    <scope>FUNCTION</scope>
    <scope>COFACTOR</scope>
    <scope>SUBCELLULAR LOCATION</scope>
    <source>
        <tissue>Leaf</tissue>
    </source>
</reference>
<sequence length="97" mass="10363">ATYKVKLITPDGPVVFDCPDNEYILDAAEEQGHDLPYSCRAGSCSSCAGKVTAGTVDQSDGNFLDDDQVADGFVLTCVAYPQSDVTIETHKEEELTA</sequence>
<accession>P83524</accession>
<organism evidence="3">
    <name type="scientific">Alkekengi officinarum var. franchetii</name>
    <name type="common">Japanese lantern</name>
    <name type="synonym">Physalis franchetii</name>
    <dbReference type="NCBI Taxonomy" id="221454"/>
    <lineage>
        <taxon>Eukaryota</taxon>
        <taxon>Viridiplantae</taxon>
        <taxon>Streptophyta</taxon>
        <taxon>Embryophyta</taxon>
        <taxon>Tracheophyta</taxon>
        <taxon>Spermatophyta</taxon>
        <taxon>Magnoliopsida</taxon>
        <taxon>eudicotyledons</taxon>
        <taxon>Gunneridae</taxon>
        <taxon>Pentapetalae</taxon>
        <taxon>asterids</taxon>
        <taxon>lamiids</taxon>
        <taxon>Solanales</taxon>
        <taxon>Solanaceae</taxon>
        <taxon>Solanoideae</taxon>
        <taxon>Physaleae</taxon>
        <taxon>Alkekengi</taxon>
    </lineage>
</organism>
<comment type="function">
    <text evidence="2">Ferredoxins are iron-sulfur proteins that transfer electrons in a wide variety of metabolic reactions.</text>
</comment>
<comment type="cofactor">
    <cofactor evidence="2">
        <name>[2Fe-2S] cluster</name>
        <dbReference type="ChEBI" id="CHEBI:190135"/>
    </cofactor>
    <text evidence="2">Binds 1 [2Fe-2S] cluster.</text>
</comment>
<comment type="subcellular location">
    <subcellularLocation>
        <location evidence="2">Plastid</location>
        <location evidence="2">Chloroplast</location>
    </subcellularLocation>
</comment>
<comment type="similarity">
    <text evidence="3">Belongs to the 2Fe2S plant-type ferredoxin family.</text>
</comment>
<proteinExistence type="evidence at protein level"/>
<dbReference type="SMR" id="P83524"/>
<dbReference type="GO" id="GO:0009507">
    <property type="term" value="C:chloroplast"/>
    <property type="evidence" value="ECO:0000304"/>
    <property type="project" value="UniProtKB"/>
</dbReference>
<dbReference type="GO" id="GO:0009570">
    <property type="term" value="C:chloroplast stroma"/>
    <property type="evidence" value="ECO:0007669"/>
    <property type="project" value="TreeGrafter"/>
</dbReference>
<dbReference type="GO" id="GO:0051537">
    <property type="term" value="F:2 iron, 2 sulfur cluster binding"/>
    <property type="evidence" value="ECO:0007669"/>
    <property type="project" value="UniProtKB-KW"/>
</dbReference>
<dbReference type="GO" id="GO:0009055">
    <property type="term" value="F:electron transfer activity"/>
    <property type="evidence" value="ECO:0000304"/>
    <property type="project" value="UniProtKB"/>
</dbReference>
<dbReference type="GO" id="GO:0008198">
    <property type="term" value="F:ferrous iron binding"/>
    <property type="evidence" value="ECO:0000304"/>
    <property type="project" value="UniProtKB"/>
</dbReference>
<dbReference type="GO" id="GO:0022900">
    <property type="term" value="P:electron transport chain"/>
    <property type="evidence" value="ECO:0007669"/>
    <property type="project" value="InterPro"/>
</dbReference>
<dbReference type="GO" id="GO:0006124">
    <property type="term" value="P:ferredoxin metabolic process"/>
    <property type="evidence" value="ECO:0000304"/>
    <property type="project" value="UniProtKB"/>
</dbReference>
<dbReference type="CDD" id="cd00207">
    <property type="entry name" value="fer2"/>
    <property type="match status" value="1"/>
</dbReference>
<dbReference type="FunFam" id="3.10.20.30:FF:000014">
    <property type="entry name" value="Ferredoxin"/>
    <property type="match status" value="1"/>
</dbReference>
<dbReference type="Gene3D" id="3.10.20.30">
    <property type="match status" value="1"/>
</dbReference>
<dbReference type="InterPro" id="IPR036010">
    <property type="entry name" value="2Fe-2S_ferredoxin-like_sf"/>
</dbReference>
<dbReference type="InterPro" id="IPR001041">
    <property type="entry name" value="2Fe-2S_ferredoxin-type"/>
</dbReference>
<dbReference type="InterPro" id="IPR006058">
    <property type="entry name" value="2Fe2S_fd_BS"/>
</dbReference>
<dbReference type="InterPro" id="IPR012675">
    <property type="entry name" value="Beta-grasp_dom_sf"/>
</dbReference>
<dbReference type="InterPro" id="IPR010241">
    <property type="entry name" value="Fd_pln"/>
</dbReference>
<dbReference type="NCBIfam" id="TIGR02008">
    <property type="entry name" value="fdx_plant"/>
    <property type="match status" value="1"/>
</dbReference>
<dbReference type="PANTHER" id="PTHR43112">
    <property type="entry name" value="FERREDOXIN"/>
    <property type="match status" value="1"/>
</dbReference>
<dbReference type="PANTHER" id="PTHR43112:SF3">
    <property type="entry name" value="FERREDOXIN-2, CHLOROPLASTIC"/>
    <property type="match status" value="1"/>
</dbReference>
<dbReference type="Pfam" id="PF00111">
    <property type="entry name" value="Fer2"/>
    <property type="match status" value="1"/>
</dbReference>
<dbReference type="SUPFAM" id="SSF54292">
    <property type="entry name" value="2Fe-2S ferredoxin-like"/>
    <property type="match status" value="1"/>
</dbReference>
<dbReference type="PROSITE" id="PS00197">
    <property type="entry name" value="2FE2S_FER_1"/>
    <property type="match status" value="1"/>
</dbReference>
<dbReference type="PROSITE" id="PS51085">
    <property type="entry name" value="2FE2S_FER_2"/>
    <property type="match status" value="1"/>
</dbReference>
<evidence type="ECO:0000255" key="1">
    <source>
        <dbReference type="PROSITE-ProRule" id="PRU00465"/>
    </source>
</evidence>
<evidence type="ECO:0000269" key="2">
    <source>
    </source>
</evidence>
<evidence type="ECO:0000305" key="3"/>
<protein>
    <recommendedName>
        <fullName>Ferredoxin</fullName>
    </recommendedName>
</protein>
<keyword id="KW-0001">2Fe-2S</keyword>
<keyword id="KW-0150">Chloroplast</keyword>
<keyword id="KW-0903">Direct protein sequencing</keyword>
<keyword id="KW-0249">Electron transport</keyword>
<keyword id="KW-0408">Iron</keyword>
<keyword id="KW-0411">Iron-sulfur</keyword>
<keyword id="KW-0479">Metal-binding</keyword>
<keyword id="KW-0934">Plastid</keyword>
<keyword id="KW-0813">Transport</keyword>
<name>FER_ALKOR</name>
<feature type="chain" id="PRO_0000189347" description="Ferredoxin">
    <location>
        <begin position="1"/>
        <end position="97"/>
    </location>
</feature>
<feature type="domain" description="2Fe-2S ferredoxin-type" evidence="1">
    <location>
        <begin position="3"/>
        <end position="93"/>
    </location>
</feature>
<feature type="binding site" evidence="1">
    <location>
        <position position="39"/>
    </location>
    <ligand>
        <name>[2Fe-2S] cluster</name>
        <dbReference type="ChEBI" id="CHEBI:190135"/>
    </ligand>
</feature>
<feature type="binding site" evidence="1">
    <location>
        <position position="44"/>
    </location>
    <ligand>
        <name>[2Fe-2S] cluster</name>
        <dbReference type="ChEBI" id="CHEBI:190135"/>
    </ligand>
</feature>
<feature type="binding site" evidence="1">
    <location>
        <position position="47"/>
    </location>
    <ligand>
        <name>[2Fe-2S] cluster</name>
        <dbReference type="ChEBI" id="CHEBI:190135"/>
    </ligand>
</feature>
<feature type="binding site" evidence="1">
    <location>
        <position position="77"/>
    </location>
    <ligand>
        <name>[2Fe-2S] cluster</name>
        <dbReference type="ChEBI" id="CHEBI:190135"/>
    </ligand>
</feature>